<evidence type="ECO:0000255" key="1">
    <source>
        <dbReference type="HAMAP-Rule" id="MF_00067"/>
    </source>
</evidence>
<accession>C4XJU6</accession>
<reference key="1">
    <citation type="journal article" date="2009" name="Genome Res.">
        <title>Whole genome sequence of Desulfovibrio magneticus strain RS-1 revealed common gene clusters in magnetotactic bacteria.</title>
        <authorList>
            <person name="Nakazawa H."/>
            <person name="Arakaki A."/>
            <person name="Narita-Yamada S."/>
            <person name="Yashiro I."/>
            <person name="Jinno K."/>
            <person name="Aoki N."/>
            <person name="Tsuruyama A."/>
            <person name="Okamura Y."/>
            <person name="Tanikawa S."/>
            <person name="Fujita N."/>
            <person name="Takeyama H."/>
            <person name="Matsunaga T."/>
        </authorList>
    </citation>
    <scope>NUCLEOTIDE SEQUENCE [LARGE SCALE GENOMIC DNA]</scope>
    <source>
        <strain>ATCC 700980 / DSM 13731 / RS-1</strain>
    </source>
</reference>
<proteinExistence type="inferred from homology"/>
<sequence length="204" mass="21499">MSENALRLIASYVEEAAAARARFFTDHAELVDAAARTMAVALARGGKILFCGNGGSAADAQHLAAEFVNRFELERPPLPALALTTDSSALTAIGNDYGFDRVFAKQVQALAGPSDVVVGISTSGNSPNVLAALRAARDKGCVTVGLAGRNGAIVPLCDYALLVPSDRTAHIQEVHATIGHLLCKLVDHYLFEAVMELGPYLEDH</sequence>
<dbReference type="EC" id="5.3.1.28" evidence="1"/>
<dbReference type="EMBL" id="AP010904">
    <property type="protein sequence ID" value="BAH74301.1"/>
    <property type="molecule type" value="Genomic_DNA"/>
</dbReference>
<dbReference type="RefSeq" id="WP_012750376.1">
    <property type="nucleotide sequence ID" value="NC_012796.1"/>
</dbReference>
<dbReference type="SMR" id="C4XJU6"/>
<dbReference type="STRING" id="573370.DMR_08100"/>
<dbReference type="KEGG" id="dma:DMR_08100"/>
<dbReference type="eggNOG" id="COG0279">
    <property type="taxonomic scope" value="Bacteria"/>
</dbReference>
<dbReference type="HOGENOM" id="CLU_080999_3_0_7"/>
<dbReference type="OrthoDB" id="9810929at2"/>
<dbReference type="UniPathway" id="UPA00041">
    <property type="reaction ID" value="UER00436"/>
</dbReference>
<dbReference type="Proteomes" id="UP000009071">
    <property type="component" value="Chromosome"/>
</dbReference>
<dbReference type="GO" id="GO:0005737">
    <property type="term" value="C:cytoplasm"/>
    <property type="evidence" value="ECO:0007669"/>
    <property type="project" value="UniProtKB-SubCell"/>
</dbReference>
<dbReference type="GO" id="GO:0097367">
    <property type="term" value="F:carbohydrate derivative binding"/>
    <property type="evidence" value="ECO:0007669"/>
    <property type="project" value="InterPro"/>
</dbReference>
<dbReference type="GO" id="GO:0008968">
    <property type="term" value="F:D-sedoheptulose 7-phosphate isomerase activity"/>
    <property type="evidence" value="ECO:0007669"/>
    <property type="project" value="UniProtKB-UniRule"/>
</dbReference>
<dbReference type="GO" id="GO:0008270">
    <property type="term" value="F:zinc ion binding"/>
    <property type="evidence" value="ECO:0007669"/>
    <property type="project" value="UniProtKB-UniRule"/>
</dbReference>
<dbReference type="GO" id="GO:0005975">
    <property type="term" value="P:carbohydrate metabolic process"/>
    <property type="evidence" value="ECO:0007669"/>
    <property type="project" value="UniProtKB-UniRule"/>
</dbReference>
<dbReference type="GO" id="GO:2001061">
    <property type="term" value="P:D-glycero-D-manno-heptose 7-phosphate biosynthetic process"/>
    <property type="evidence" value="ECO:0007669"/>
    <property type="project" value="UniProtKB-UniPathway"/>
</dbReference>
<dbReference type="CDD" id="cd05006">
    <property type="entry name" value="SIS_GmhA"/>
    <property type="match status" value="1"/>
</dbReference>
<dbReference type="Gene3D" id="3.40.50.10490">
    <property type="entry name" value="Glucose-6-phosphate isomerase like protein, domain 1"/>
    <property type="match status" value="1"/>
</dbReference>
<dbReference type="HAMAP" id="MF_00067">
    <property type="entry name" value="GmhA"/>
    <property type="match status" value="1"/>
</dbReference>
<dbReference type="InterPro" id="IPR035461">
    <property type="entry name" value="GmhA/DiaA"/>
</dbReference>
<dbReference type="InterPro" id="IPR004515">
    <property type="entry name" value="Phosphoheptose_Isoase"/>
</dbReference>
<dbReference type="InterPro" id="IPR001347">
    <property type="entry name" value="SIS_dom"/>
</dbReference>
<dbReference type="InterPro" id="IPR046348">
    <property type="entry name" value="SIS_dom_sf"/>
</dbReference>
<dbReference type="InterPro" id="IPR050099">
    <property type="entry name" value="SIS_GmhA/DiaA_subfam"/>
</dbReference>
<dbReference type="PANTHER" id="PTHR30390:SF6">
    <property type="entry name" value="DNAA INITIATOR-ASSOCIATING PROTEIN DIAA"/>
    <property type="match status" value="1"/>
</dbReference>
<dbReference type="PANTHER" id="PTHR30390">
    <property type="entry name" value="SEDOHEPTULOSE 7-PHOSPHATE ISOMERASE / DNAA INITIATOR-ASSOCIATING FACTOR FOR REPLICATION INITIATION"/>
    <property type="match status" value="1"/>
</dbReference>
<dbReference type="Pfam" id="PF13580">
    <property type="entry name" value="SIS_2"/>
    <property type="match status" value="1"/>
</dbReference>
<dbReference type="SUPFAM" id="SSF53697">
    <property type="entry name" value="SIS domain"/>
    <property type="match status" value="1"/>
</dbReference>
<dbReference type="PROSITE" id="PS51464">
    <property type="entry name" value="SIS"/>
    <property type="match status" value="1"/>
</dbReference>
<name>GMHA_SOLM1</name>
<organism>
    <name type="scientific">Solidesulfovibrio magneticus (strain ATCC 700980 / DSM 13731 / RS-1)</name>
    <name type="common">Desulfovibrio magneticus</name>
    <dbReference type="NCBI Taxonomy" id="573370"/>
    <lineage>
        <taxon>Bacteria</taxon>
        <taxon>Pseudomonadati</taxon>
        <taxon>Thermodesulfobacteriota</taxon>
        <taxon>Desulfovibrionia</taxon>
        <taxon>Desulfovibrionales</taxon>
        <taxon>Desulfovibrionaceae</taxon>
        <taxon>Solidesulfovibrio</taxon>
    </lineage>
</organism>
<protein>
    <recommendedName>
        <fullName evidence="1">Phosphoheptose isomerase</fullName>
        <ecNumber evidence="1">5.3.1.28</ecNumber>
    </recommendedName>
    <alternativeName>
        <fullName evidence="1">Sedoheptulose 7-phosphate isomerase</fullName>
    </alternativeName>
</protein>
<feature type="chain" id="PRO_1000202417" description="Phosphoheptose isomerase">
    <location>
        <begin position="1"/>
        <end position="204"/>
    </location>
</feature>
<feature type="domain" description="SIS" evidence="1">
    <location>
        <begin position="38"/>
        <end position="199"/>
    </location>
</feature>
<feature type="binding site" evidence="1">
    <location>
        <begin position="53"/>
        <end position="55"/>
    </location>
    <ligand>
        <name>substrate</name>
    </ligand>
</feature>
<feature type="binding site" evidence="1">
    <location>
        <position position="62"/>
    </location>
    <ligand>
        <name>Zn(2+)</name>
        <dbReference type="ChEBI" id="CHEBI:29105"/>
    </ligand>
</feature>
<feature type="binding site" evidence="1">
    <location>
        <position position="66"/>
    </location>
    <ligand>
        <name>substrate</name>
    </ligand>
</feature>
<feature type="binding site" evidence="1">
    <location>
        <position position="66"/>
    </location>
    <ligand>
        <name>Zn(2+)</name>
        <dbReference type="ChEBI" id="CHEBI:29105"/>
    </ligand>
</feature>
<feature type="binding site" evidence="1">
    <location>
        <begin position="95"/>
        <end position="96"/>
    </location>
    <ligand>
        <name>substrate</name>
    </ligand>
</feature>
<feature type="binding site" evidence="1">
    <location>
        <begin position="121"/>
        <end position="123"/>
    </location>
    <ligand>
        <name>substrate</name>
    </ligand>
</feature>
<feature type="binding site" evidence="1">
    <location>
        <position position="126"/>
    </location>
    <ligand>
        <name>substrate</name>
    </ligand>
</feature>
<feature type="binding site" evidence="1">
    <location>
        <position position="172"/>
    </location>
    <ligand>
        <name>substrate</name>
    </ligand>
</feature>
<feature type="binding site" evidence="1">
    <location>
        <position position="172"/>
    </location>
    <ligand>
        <name>Zn(2+)</name>
        <dbReference type="ChEBI" id="CHEBI:29105"/>
    </ligand>
</feature>
<feature type="binding site" evidence="1">
    <location>
        <position position="180"/>
    </location>
    <ligand>
        <name>Zn(2+)</name>
        <dbReference type="ChEBI" id="CHEBI:29105"/>
    </ligand>
</feature>
<keyword id="KW-0119">Carbohydrate metabolism</keyword>
<keyword id="KW-0963">Cytoplasm</keyword>
<keyword id="KW-0413">Isomerase</keyword>
<keyword id="KW-0479">Metal-binding</keyword>
<keyword id="KW-0862">Zinc</keyword>
<gene>
    <name evidence="1" type="primary">gmhA</name>
    <name type="ordered locus">DMR_08100</name>
</gene>
<comment type="function">
    <text evidence="1">Catalyzes the isomerization of sedoheptulose 7-phosphate in D-glycero-D-manno-heptose 7-phosphate.</text>
</comment>
<comment type="catalytic activity">
    <reaction evidence="1">
        <text>2 D-sedoheptulose 7-phosphate = D-glycero-alpha-D-manno-heptose 7-phosphate + D-glycero-beta-D-manno-heptose 7-phosphate</text>
        <dbReference type="Rhea" id="RHEA:27489"/>
        <dbReference type="ChEBI" id="CHEBI:57483"/>
        <dbReference type="ChEBI" id="CHEBI:60203"/>
        <dbReference type="ChEBI" id="CHEBI:60204"/>
        <dbReference type="EC" id="5.3.1.28"/>
    </reaction>
</comment>
<comment type="cofactor">
    <cofactor evidence="1">
        <name>Zn(2+)</name>
        <dbReference type="ChEBI" id="CHEBI:29105"/>
    </cofactor>
    <text evidence="1">Binds 1 zinc ion per subunit.</text>
</comment>
<comment type="pathway">
    <text evidence="1">Carbohydrate biosynthesis; D-glycero-D-manno-heptose 7-phosphate biosynthesis; D-glycero-alpha-D-manno-heptose 7-phosphate and D-glycero-beta-D-manno-heptose 7-phosphate from sedoheptulose 7-phosphate: step 1/1.</text>
</comment>
<comment type="subunit">
    <text evidence="1">Homotetramer.</text>
</comment>
<comment type="subcellular location">
    <subcellularLocation>
        <location evidence="1">Cytoplasm</location>
    </subcellularLocation>
</comment>
<comment type="miscellaneous">
    <text evidence="1">The reaction produces a racemic mixture of D-glycero-alpha-D-manno-heptose 7-phosphate and D-glycero-beta-D-manno-heptose 7-phosphate.</text>
</comment>
<comment type="similarity">
    <text evidence="1">Belongs to the SIS family. GmhA subfamily.</text>
</comment>